<protein>
    <recommendedName>
        <fullName evidence="1">Nucleoside diphosphate kinase</fullName>
        <shortName evidence="1">NDK</shortName>
        <shortName evidence="1">NDP kinase</shortName>
        <ecNumber evidence="1">2.7.4.6</ecNumber>
    </recommendedName>
    <alternativeName>
        <fullName evidence="1">Nucleoside-2-P kinase</fullName>
    </alternativeName>
</protein>
<sequence>MAIERTFSIIKPDAVSKNLIGAIYNRFESAGLKVIAAKMLHMSSEQAAGFYAEHQGKPFYDGLVSFMTSGPVMIQVLEGEEAIRRHREIMGATNPKEALAGTLRACFAESIDRNAVHGSDAPASAAREIAYFFSDAEICPRG</sequence>
<dbReference type="EC" id="2.7.4.6" evidence="1"/>
<dbReference type="EMBL" id="CP000462">
    <property type="protein sequence ID" value="ABK38767.1"/>
    <property type="molecule type" value="Genomic_DNA"/>
</dbReference>
<dbReference type="RefSeq" id="WP_011705641.1">
    <property type="nucleotide sequence ID" value="NC_008570.1"/>
</dbReference>
<dbReference type="RefSeq" id="YP_856291.1">
    <property type="nucleotide sequence ID" value="NC_008570.1"/>
</dbReference>
<dbReference type="SMR" id="A0KJ40"/>
<dbReference type="STRING" id="380703.AHA_1755"/>
<dbReference type="EnsemblBacteria" id="ABK38767">
    <property type="protein sequence ID" value="ABK38767"/>
    <property type="gene ID" value="AHA_1755"/>
</dbReference>
<dbReference type="GeneID" id="4490285"/>
<dbReference type="KEGG" id="aha:AHA_1755"/>
<dbReference type="PATRIC" id="fig|380703.7.peg.1770"/>
<dbReference type="eggNOG" id="COG0105">
    <property type="taxonomic scope" value="Bacteria"/>
</dbReference>
<dbReference type="HOGENOM" id="CLU_060216_8_1_6"/>
<dbReference type="OrthoDB" id="9801161at2"/>
<dbReference type="Proteomes" id="UP000000756">
    <property type="component" value="Chromosome"/>
</dbReference>
<dbReference type="GO" id="GO:0005737">
    <property type="term" value="C:cytoplasm"/>
    <property type="evidence" value="ECO:0007669"/>
    <property type="project" value="UniProtKB-SubCell"/>
</dbReference>
<dbReference type="GO" id="GO:0005524">
    <property type="term" value="F:ATP binding"/>
    <property type="evidence" value="ECO:0007669"/>
    <property type="project" value="UniProtKB-UniRule"/>
</dbReference>
<dbReference type="GO" id="GO:0046872">
    <property type="term" value="F:metal ion binding"/>
    <property type="evidence" value="ECO:0007669"/>
    <property type="project" value="UniProtKB-KW"/>
</dbReference>
<dbReference type="GO" id="GO:0004550">
    <property type="term" value="F:nucleoside diphosphate kinase activity"/>
    <property type="evidence" value="ECO:0007669"/>
    <property type="project" value="UniProtKB-UniRule"/>
</dbReference>
<dbReference type="GO" id="GO:0006241">
    <property type="term" value="P:CTP biosynthetic process"/>
    <property type="evidence" value="ECO:0007669"/>
    <property type="project" value="UniProtKB-UniRule"/>
</dbReference>
<dbReference type="GO" id="GO:0006183">
    <property type="term" value="P:GTP biosynthetic process"/>
    <property type="evidence" value="ECO:0007669"/>
    <property type="project" value="UniProtKB-UniRule"/>
</dbReference>
<dbReference type="GO" id="GO:0006228">
    <property type="term" value="P:UTP biosynthetic process"/>
    <property type="evidence" value="ECO:0007669"/>
    <property type="project" value="UniProtKB-UniRule"/>
</dbReference>
<dbReference type="CDD" id="cd04413">
    <property type="entry name" value="NDPk_I"/>
    <property type="match status" value="1"/>
</dbReference>
<dbReference type="FunFam" id="3.30.70.141:FF:000001">
    <property type="entry name" value="Nucleoside diphosphate kinase"/>
    <property type="match status" value="1"/>
</dbReference>
<dbReference type="Gene3D" id="3.30.70.141">
    <property type="entry name" value="Nucleoside diphosphate kinase-like domain"/>
    <property type="match status" value="1"/>
</dbReference>
<dbReference type="HAMAP" id="MF_00451">
    <property type="entry name" value="NDP_kinase"/>
    <property type="match status" value="1"/>
</dbReference>
<dbReference type="InterPro" id="IPR034907">
    <property type="entry name" value="NDK-like_dom"/>
</dbReference>
<dbReference type="InterPro" id="IPR036850">
    <property type="entry name" value="NDK-like_dom_sf"/>
</dbReference>
<dbReference type="InterPro" id="IPR001564">
    <property type="entry name" value="Nucleoside_diP_kinase"/>
</dbReference>
<dbReference type="InterPro" id="IPR023005">
    <property type="entry name" value="Nucleoside_diP_kinase_AS"/>
</dbReference>
<dbReference type="NCBIfam" id="NF001908">
    <property type="entry name" value="PRK00668.1"/>
    <property type="match status" value="1"/>
</dbReference>
<dbReference type="PANTHER" id="PTHR46161">
    <property type="entry name" value="NUCLEOSIDE DIPHOSPHATE KINASE"/>
    <property type="match status" value="1"/>
</dbReference>
<dbReference type="PANTHER" id="PTHR46161:SF3">
    <property type="entry name" value="NUCLEOSIDE DIPHOSPHATE KINASE DDB_G0292928-RELATED"/>
    <property type="match status" value="1"/>
</dbReference>
<dbReference type="Pfam" id="PF00334">
    <property type="entry name" value="NDK"/>
    <property type="match status" value="1"/>
</dbReference>
<dbReference type="PRINTS" id="PR01243">
    <property type="entry name" value="NUCDPKINASE"/>
</dbReference>
<dbReference type="SMART" id="SM00562">
    <property type="entry name" value="NDK"/>
    <property type="match status" value="1"/>
</dbReference>
<dbReference type="SUPFAM" id="SSF54919">
    <property type="entry name" value="Nucleoside diphosphate kinase, NDK"/>
    <property type="match status" value="1"/>
</dbReference>
<dbReference type="PROSITE" id="PS00469">
    <property type="entry name" value="NDPK"/>
    <property type="match status" value="1"/>
</dbReference>
<dbReference type="PROSITE" id="PS51374">
    <property type="entry name" value="NDPK_LIKE"/>
    <property type="match status" value="1"/>
</dbReference>
<comment type="function">
    <text evidence="1">Major role in the synthesis of nucleoside triphosphates other than ATP. The ATP gamma phosphate is transferred to the NDP beta phosphate via a ping-pong mechanism, using a phosphorylated active-site intermediate.</text>
</comment>
<comment type="catalytic activity">
    <reaction evidence="1">
        <text>a 2'-deoxyribonucleoside 5'-diphosphate + ATP = a 2'-deoxyribonucleoside 5'-triphosphate + ADP</text>
        <dbReference type="Rhea" id="RHEA:44640"/>
        <dbReference type="ChEBI" id="CHEBI:30616"/>
        <dbReference type="ChEBI" id="CHEBI:61560"/>
        <dbReference type="ChEBI" id="CHEBI:73316"/>
        <dbReference type="ChEBI" id="CHEBI:456216"/>
        <dbReference type="EC" id="2.7.4.6"/>
    </reaction>
</comment>
<comment type="catalytic activity">
    <reaction evidence="1">
        <text>a ribonucleoside 5'-diphosphate + ATP = a ribonucleoside 5'-triphosphate + ADP</text>
        <dbReference type="Rhea" id="RHEA:18113"/>
        <dbReference type="ChEBI" id="CHEBI:30616"/>
        <dbReference type="ChEBI" id="CHEBI:57930"/>
        <dbReference type="ChEBI" id="CHEBI:61557"/>
        <dbReference type="ChEBI" id="CHEBI:456216"/>
        <dbReference type="EC" id="2.7.4.6"/>
    </reaction>
</comment>
<comment type="cofactor">
    <cofactor evidence="1">
        <name>Mg(2+)</name>
        <dbReference type="ChEBI" id="CHEBI:18420"/>
    </cofactor>
</comment>
<comment type="subunit">
    <text evidence="1">Homotetramer.</text>
</comment>
<comment type="subcellular location">
    <subcellularLocation>
        <location evidence="1">Cytoplasm</location>
    </subcellularLocation>
</comment>
<comment type="similarity">
    <text evidence="1">Belongs to the NDK family.</text>
</comment>
<accession>A0KJ40</accession>
<proteinExistence type="inferred from homology"/>
<evidence type="ECO:0000255" key="1">
    <source>
        <dbReference type="HAMAP-Rule" id="MF_00451"/>
    </source>
</evidence>
<keyword id="KW-0067">ATP-binding</keyword>
<keyword id="KW-0963">Cytoplasm</keyword>
<keyword id="KW-0418">Kinase</keyword>
<keyword id="KW-0460">Magnesium</keyword>
<keyword id="KW-0479">Metal-binding</keyword>
<keyword id="KW-0546">Nucleotide metabolism</keyword>
<keyword id="KW-0547">Nucleotide-binding</keyword>
<keyword id="KW-0597">Phosphoprotein</keyword>
<keyword id="KW-1185">Reference proteome</keyword>
<keyword id="KW-0808">Transferase</keyword>
<feature type="chain" id="PRO_1000026204" description="Nucleoside diphosphate kinase">
    <location>
        <begin position="1"/>
        <end position="142"/>
    </location>
</feature>
<feature type="active site" description="Pros-phosphohistidine intermediate" evidence="1">
    <location>
        <position position="117"/>
    </location>
</feature>
<feature type="binding site" evidence="1">
    <location>
        <position position="11"/>
    </location>
    <ligand>
        <name>ATP</name>
        <dbReference type="ChEBI" id="CHEBI:30616"/>
    </ligand>
</feature>
<feature type="binding site" evidence="1">
    <location>
        <position position="59"/>
    </location>
    <ligand>
        <name>ATP</name>
        <dbReference type="ChEBI" id="CHEBI:30616"/>
    </ligand>
</feature>
<feature type="binding site" evidence="1">
    <location>
        <position position="87"/>
    </location>
    <ligand>
        <name>ATP</name>
        <dbReference type="ChEBI" id="CHEBI:30616"/>
    </ligand>
</feature>
<feature type="binding site" evidence="1">
    <location>
        <position position="93"/>
    </location>
    <ligand>
        <name>ATP</name>
        <dbReference type="ChEBI" id="CHEBI:30616"/>
    </ligand>
</feature>
<feature type="binding site" evidence="1">
    <location>
        <position position="104"/>
    </location>
    <ligand>
        <name>ATP</name>
        <dbReference type="ChEBI" id="CHEBI:30616"/>
    </ligand>
</feature>
<feature type="binding site" evidence="1">
    <location>
        <position position="114"/>
    </location>
    <ligand>
        <name>ATP</name>
        <dbReference type="ChEBI" id="CHEBI:30616"/>
    </ligand>
</feature>
<organism>
    <name type="scientific">Aeromonas hydrophila subsp. hydrophila (strain ATCC 7966 / DSM 30187 / BCRC 13018 / CCUG 14551 / JCM 1027 / KCTC 2358 / NCIMB 9240 / NCTC 8049)</name>
    <dbReference type="NCBI Taxonomy" id="380703"/>
    <lineage>
        <taxon>Bacteria</taxon>
        <taxon>Pseudomonadati</taxon>
        <taxon>Pseudomonadota</taxon>
        <taxon>Gammaproteobacteria</taxon>
        <taxon>Aeromonadales</taxon>
        <taxon>Aeromonadaceae</taxon>
        <taxon>Aeromonas</taxon>
    </lineage>
</organism>
<gene>
    <name evidence="1" type="primary">ndk</name>
    <name type="ordered locus">AHA_1755</name>
</gene>
<reference key="1">
    <citation type="journal article" date="2006" name="J. Bacteriol.">
        <title>Genome sequence of Aeromonas hydrophila ATCC 7966T: jack of all trades.</title>
        <authorList>
            <person name="Seshadri R."/>
            <person name="Joseph S.W."/>
            <person name="Chopra A.K."/>
            <person name="Sha J."/>
            <person name="Shaw J."/>
            <person name="Graf J."/>
            <person name="Haft D.H."/>
            <person name="Wu M."/>
            <person name="Ren Q."/>
            <person name="Rosovitz M.J."/>
            <person name="Madupu R."/>
            <person name="Tallon L."/>
            <person name="Kim M."/>
            <person name="Jin S."/>
            <person name="Vuong H."/>
            <person name="Stine O.C."/>
            <person name="Ali A."/>
            <person name="Horneman A.J."/>
            <person name="Heidelberg J.F."/>
        </authorList>
    </citation>
    <scope>NUCLEOTIDE SEQUENCE [LARGE SCALE GENOMIC DNA]</scope>
    <source>
        <strain>ATCC 7966 / DSM 30187 / BCRC 13018 / CCUG 14551 / JCM 1027 / KCTC 2358 / NCIMB 9240 / NCTC 8049</strain>
    </source>
</reference>
<name>NDK_AERHH</name>